<feature type="chain" id="PRO_0000074177" description="Probable U2 small nuclear ribonucleoprotein A'">
    <location>
        <begin position="1"/>
        <end position="265"/>
    </location>
</feature>
<feature type="repeat" description="LRR 1">
    <location>
        <begin position="20"/>
        <end position="41"/>
    </location>
</feature>
<feature type="repeat" description="LRR 2">
    <location>
        <begin position="43"/>
        <end position="64"/>
    </location>
</feature>
<feature type="repeat" description="LRR 3">
    <location>
        <begin position="65"/>
        <end position="86"/>
    </location>
</feature>
<feature type="repeat" description="LRR 4">
    <location>
        <begin position="89"/>
        <end position="110"/>
    </location>
</feature>
<feature type="domain" description="LRRCT">
    <location>
        <begin position="123"/>
        <end position="161"/>
    </location>
</feature>
<feature type="helix" evidence="6">
    <location>
        <begin position="6"/>
        <end position="11"/>
    </location>
</feature>
<feature type="strand" evidence="6">
    <location>
        <begin position="14"/>
        <end position="16"/>
    </location>
</feature>
<feature type="strand" evidence="6">
    <location>
        <begin position="22"/>
        <end position="25"/>
    </location>
</feature>
<feature type="helix" evidence="6">
    <location>
        <begin position="37"/>
        <end position="40"/>
    </location>
</feature>
<feature type="strand" evidence="6">
    <location>
        <begin position="45"/>
        <end position="48"/>
    </location>
</feature>
<feature type="strand" evidence="6">
    <location>
        <begin position="55"/>
        <end position="57"/>
    </location>
</feature>
<feature type="strand" evidence="6">
    <location>
        <begin position="68"/>
        <end position="70"/>
    </location>
</feature>
<feature type="helix" evidence="6">
    <location>
        <begin position="83"/>
        <end position="85"/>
    </location>
</feature>
<feature type="strand" evidence="6">
    <location>
        <begin position="92"/>
        <end position="94"/>
    </location>
</feature>
<feature type="helix" evidence="6">
    <location>
        <begin position="103"/>
        <end position="109"/>
    </location>
</feature>
<feature type="strand" evidence="6">
    <location>
        <begin position="117"/>
        <end position="119"/>
    </location>
</feature>
<feature type="helix" evidence="6">
    <location>
        <begin position="124"/>
        <end position="127"/>
    </location>
</feature>
<feature type="helix" evidence="6">
    <location>
        <begin position="131"/>
        <end position="138"/>
    </location>
</feature>
<feature type="helix" evidence="6">
    <location>
        <begin position="152"/>
        <end position="163"/>
    </location>
</feature>
<feature type="helix" evidence="6">
    <location>
        <begin position="165"/>
        <end position="174"/>
    </location>
</feature>
<keyword id="KW-0002">3D-structure</keyword>
<keyword id="KW-0433">Leucine-rich repeat</keyword>
<keyword id="KW-0539">Nucleus</keyword>
<keyword id="KW-1185">Reference proteome</keyword>
<keyword id="KW-0677">Repeat</keyword>
<keyword id="KW-0687">Ribonucleoprotein</keyword>
<keyword id="KW-0694">RNA-binding</keyword>
<gene>
    <name type="primary">U2A</name>
    <name type="ORF">CG1406</name>
</gene>
<accession>Q9V4Q8</accession>
<reference key="1">
    <citation type="journal article" date="2000" name="Science">
        <title>The genome sequence of Drosophila melanogaster.</title>
        <authorList>
            <person name="Adams M.D."/>
            <person name="Celniker S.E."/>
            <person name="Holt R.A."/>
            <person name="Evans C.A."/>
            <person name="Gocayne J.D."/>
            <person name="Amanatides P.G."/>
            <person name="Scherer S.E."/>
            <person name="Li P.W."/>
            <person name="Hoskins R.A."/>
            <person name="Galle R.F."/>
            <person name="George R.A."/>
            <person name="Lewis S.E."/>
            <person name="Richards S."/>
            <person name="Ashburner M."/>
            <person name="Henderson S.N."/>
            <person name="Sutton G.G."/>
            <person name="Wortman J.R."/>
            <person name="Yandell M.D."/>
            <person name="Zhang Q."/>
            <person name="Chen L.X."/>
            <person name="Brandon R.C."/>
            <person name="Rogers Y.-H.C."/>
            <person name="Blazej R.G."/>
            <person name="Champe M."/>
            <person name="Pfeiffer B.D."/>
            <person name="Wan K.H."/>
            <person name="Doyle C."/>
            <person name="Baxter E.G."/>
            <person name="Helt G."/>
            <person name="Nelson C.R."/>
            <person name="Miklos G.L.G."/>
            <person name="Abril J.F."/>
            <person name="Agbayani A."/>
            <person name="An H.-J."/>
            <person name="Andrews-Pfannkoch C."/>
            <person name="Baldwin D."/>
            <person name="Ballew R.M."/>
            <person name="Basu A."/>
            <person name="Baxendale J."/>
            <person name="Bayraktaroglu L."/>
            <person name="Beasley E.M."/>
            <person name="Beeson K.Y."/>
            <person name="Benos P.V."/>
            <person name="Berman B.P."/>
            <person name="Bhandari D."/>
            <person name="Bolshakov S."/>
            <person name="Borkova D."/>
            <person name="Botchan M.R."/>
            <person name="Bouck J."/>
            <person name="Brokstein P."/>
            <person name="Brottier P."/>
            <person name="Burtis K.C."/>
            <person name="Busam D.A."/>
            <person name="Butler H."/>
            <person name="Cadieu E."/>
            <person name="Center A."/>
            <person name="Chandra I."/>
            <person name="Cherry J.M."/>
            <person name="Cawley S."/>
            <person name="Dahlke C."/>
            <person name="Davenport L.B."/>
            <person name="Davies P."/>
            <person name="de Pablos B."/>
            <person name="Delcher A."/>
            <person name="Deng Z."/>
            <person name="Mays A.D."/>
            <person name="Dew I."/>
            <person name="Dietz S.M."/>
            <person name="Dodson K."/>
            <person name="Doup L.E."/>
            <person name="Downes M."/>
            <person name="Dugan-Rocha S."/>
            <person name="Dunkov B.C."/>
            <person name="Dunn P."/>
            <person name="Durbin K.J."/>
            <person name="Evangelista C.C."/>
            <person name="Ferraz C."/>
            <person name="Ferriera S."/>
            <person name="Fleischmann W."/>
            <person name="Fosler C."/>
            <person name="Gabrielian A.E."/>
            <person name="Garg N.S."/>
            <person name="Gelbart W.M."/>
            <person name="Glasser K."/>
            <person name="Glodek A."/>
            <person name="Gong F."/>
            <person name="Gorrell J.H."/>
            <person name="Gu Z."/>
            <person name="Guan P."/>
            <person name="Harris M."/>
            <person name="Harris N.L."/>
            <person name="Harvey D.A."/>
            <person name="Heiman T.J."/>
            <person name="Hernandez J.R."/>
            <person name="Houck J."/>
            <person name="Hostin D."/>
            <person name="Houston K.A."/>
            <person name="Howland T.J."/>
            <person name="Wei M.-H."/>
            <person name="Ibegwam C."/>
            <person name="Jalali M."/>
            <person name="Kalush F."/>
            <person name="Karpen G.H."/>
            <person name="Ke Z."/>
            <person name="Kennison J.A."/>
            <person name="Ketchum K.A."/>
            <person name="Kimmel B.E."/>
            <person name="Kodira C.D."/>
            <person name="Kraft C.L."/>
            <person name="Kravitz S."/>
            <person name="Kulp D."/>
            <person name="Lai Z."/>
            <person name="Lasko P."/>
            <person name="Lei Y."/>
            <person name="Levitsky A.A."/>
            <person name="Li J.H."/>
            <person name="Li Z."/>
            <person name="Liang Y."/>
            <person name="Lin X."/>
            <person name="Liu X."/>
            <person name="Mattei B."/>
            <person name="McIntosh T.C."/>
            <person name="McLeod M.P."/>
            <person name="McPherson D."/>
            <person name="Merkulov G."/>
            <person name="Milshina N.V."/>
            <person name="Mobarry C."/>
            <person name="Morris J."/>
            <person name="Moshrefi A."/>
            <person name="Mount S.M."/>
            <person name="Moy M."/>
            <person name="Murphy B."/>
            <person name="Murphy L."/>
            <person name="Muzny D.M."/>
            <person name="Nelson D.L."/>
            <person name="Nelson D.R."/>
            <person name="Nelson K.A."/>
            <person name="Nixon K."/>
            <person name="Nusskern D.R."/>
            <person name="Pacleb J.M."/>
            <person name="Palazzolo M."/>
            <person name="Pittman G.S."/>
            <person name="Pan S."/>
            <person name="Pollard J."/>
            <person name="Puri V."/>
            <person name="Reese M.G."/>
            <person name="Reinert K."/>
            <person name="Remington K."/>
            <person name="Saunders R.D.C."/>
            <person name="Scheeler F."/>
            <person name="Shen H."/>
            <person name="Shue B.C."/>
            <person name="Siden-Kiamos I."/>
            <person name="Simpson M."/>
            <person name="Skupski M.P."/>
            <person name="Smith T.J."/>
            <person name="Spier E."/>
            <person name="Spradling A.C."/>
            <person name="Stapleton M."/>
            <person name="Strong R."/>
            <person name="Sun E."/>
            <person name="Svirskas R."/>
            <person name="Tector C."/>
            <person name="Turner R."/>
            <person name="Venter E."/>
            <person name="Wang A.H."/>
            <person name="Wang X."/>
            <person name="Wang Z.-Y."/>
            <person name="Wassarman D.A."/>
            <person name="Weinstock G.M."/>
            <person name="Weissenbach J."/>
            <person name="Williams S.M."/>
            <person name="Woodage T."/>
            <person name="Worley K.C."/>
            <person name="Wu D."/>
            <person name="Yang S."/>
            <person name="Yao Q.A."/>
            <person name="Ye J."/>
            <person name="Yeh R.-F."/>
            <person name="Zaveri J.S."/>
            <person name="Zhan M."/>
            <person name="Zhang G."/>
            <person name="Zhao Q."/>
            <person name="Zheng L."/>
            <person name="Zheng X.H."/>
            <person name="Zhong F.N."/>
            <person name="Zhong W."/>
            <person name="Zhou X."/>
            <person name="Zhu S.C."/>
            <person name="Zhu X."/>
            <person name="Smith H.O."/>
            <person name="Gibbs R.A."/>
            <person name="Myers E.W."/>
            <person name="Rubin G.M."/>
            <person name="Venter J.C."/>
        </authorList>
    </citation>
    <scope>NUCLEOTIDE SEQUENCE [LARGE SCALE GENOMIC DNA]</scope>
    <source>
        <strain>Berkeley</strain>
    </source>
</reference>
<reference key="2">
    <citation type="journal article" date="2002" name="Genome Biol.">
        <title>Annotation of the Drosophila melanogaster euchromatic genome: a systematic review.</title>
        <authorList>
            <person name="Misra S."/>
            <person name="Crosby M.A."/>
            <person name="Mungall C.J."/>
            <person name="Matthews B.B."/>
            <person name="Campbell K.S."/>
            <person name="Hradecky P."/>
            <person name="Huang Y."/>
            <person name="Kaminker J.S."/>
            <person name="Millburn G.H."/>
            <person name="Prochnik S.E."/>
            <person name="Smith C.D."/>
            <person name="Tupy J.L."/>
            <person name="Whitfield E.J."/>
            <person name="Bayraktaroglu L."/>
            <person name="Berman B.P."/>
            <person name="Bettencourt B.R."/>
            <person name="Celniker S.E."/>
            <person name="de Grey A.D.N.J."/>
            <person name="Drysdale R.A."/>
            <person name="Harris N.L."/>
            <person name="Richter J."/>
            <person name="Russo S."/>
            <person name="Schroeder A.J."/>
            <person name="Shu S.Q."/>
            <person name="Stapleton M."/>
            <person name="Yamada C."/>
            <person name="Ashburner M."/>
            <person name="Gelbart W.M."/>
            <person name="Rubin G.M."/>
            <person name="Lewis S.E."/>
        </authorList>
    </citation>
    <scope>GENOME REANNOTATION</scope>
    <source>
        <strain>Berkeley</strain>
    </source>
</reference>
<reference key="3">
    <citation type="journal article" date="2002" name="Genome Biol.">
        <title>A Drosophila full-length cDNA resource.</title>
        <authorList>
            <person name="Stapleton M."/>
            <person name="Carlson J.W."/>
            <person name="Brokstein P."/>
            <person name="Yu C."/>
            <person name="Champe M."/>
            <person name="George R.A."/>
            <person name="Guarin H."/>
            <person name="Kronmiller B."/>
            <person name="Pacleb J.M."/>
            <person name="Park S."/>
            <person name="Wan K.H."/>
            <person name="Rubin G.M."/>
            <person name="Celniker S.E."/>
        </authorList>
    </citation>
    <scope>NUCLEOTIDE SEQUENCE [LARGE SCALE MRNA]</scope>
    <source>
        <strain>Berkeley</strain>
        <tissue>Embryo</tissue>
    </source>
</reference>
<reference key="4">
    <citation type="journal article" date="2008" name="Proc. Natl. Acad. Sci. U.S.A.">
        <title>Evolution of an RNP assembly system: a minimal SMN complex facilitates formation of UsnRNPs in Drosophila melanogaster.</title>
        <authorList>
            <person name="Kroiss M."/>
            <person name="Schultz J."/>
            <person name="Wiesner J."/>
            <person name="Chari A."/>
            <person name="Sickmann A."/>
            <person name="Fischer U."/>
        </authorList>
    </citation>
    <scope>INTERACTION WITH THE SMN COMPLEX</scope>
</reference>
<reference key="5">
    <citation type="journal article" date="2013" name="PLoS ONE">
        <title>Prp22 and spliceosome components regulate chromatin dynamics in germ-line polyploid cells.</title>
        <authorList>
            <person name="Klusza S."/>
            <person name="Novak A."/>
            <person name="Figueroa S."/>
            <person name="Palmer W."/>
            <person name="Deng W.M."/>
        </authorList>
    </citation>
    <scope>FUNCTION</scope>
    <scope>DISRUPTION PHENOTYPE</scope>
</reference>
<reference key="6">
    <citation type="journal article" date="2016" name="Proc. Natl. Acad. Sci. U.S.A.">
        <title>Major spliceosome defects cause male infertility and are associated with nonobstructive azoospermia in humans.</title>
        <authorList>
            <person name="Wu H."/>
            <person name="Sun L."/>
            <person name="Wen Y."/>
            <person name="Liu Y."/>
            <person name="Yu J."/>
            <person name="Mao F."/>
            <person name="Wang Y."/>
            <person name="Tong C."/>
            <person name="Guo X."/>
            <person name="Hu Z."/>
            <person name="Sha J."/>
            <person name="Liu M."/>
            <person name="Xia L."/>
        </authorList>
    </citation>
    <scope>FUNCTION</scope>
    <scope>DISRUPTION PHENOTYPE</scope>
</reference>
<evidence type="ECO:0000250" key="1">
    <source>
        <dbReference type="UniProtKB" id="P09661"/>
    </source>
</evidence>
<evidence type="ECO:0000269" key="2">
    <source>
    </source>
</evidence>
<evidence type="ECO:0000269" key="3">
    <source>
    </source>
</evidence>
<evidence type="ECO:0000269" key="4">
    <source>
    </source>
</evidence>
<evidence type="ECO:0000305" key="5"/>
<evidence type="ECO:0007829" key="6">
    <source>
        <dbReference type="PDB" id="6F4J"/>
    </source>
</evidence>
<proteinExistence type="evidence at protein level"/>
<sequence>MVKLTPELINQSMQYINPCRERELDLRGYKIPQIENLGATLDQFDTIDLSDNDLRKLDNLPHLPRLKCLLLNNNRILRISEGLEEAVPNLGSIILTGNNLQELSDLEPLVGFTKLETICLLINPVSTKPNYREYMAYKFPQLRLLDFRKIKQKDRQAAQEFFRTKQGKDVLKEISRKSKMSAAAAIAAEAGNGKGRGSEGGRLANPQDMQRIREAIKRASSLAEVERLSQILQSGQLPDKFQHEMEAVAQNGAGHNGSGAVAMEY</sequence>
<organism>
    <name type="scientific">Drosophila melanogaster</name>
    <name type="common">Fruit fly</name>
    <dbReference type="NCBI Taxonomy" id="7227"/>
    <lineage>
        <taxon>Eukaryota</taxon>
        <taxon>Metazoa</taxon>
        <taxon>Ecdysozoa</taxon>
        <taxon>Arthropoda</taxon>
        <taxon>Hexapoda</taxon>
        <taxon>Insecta</taxon>
        <taxon>Pterygota</taxon>
        <taxon>Neoptera</taxon>
        <taxon>Endopterygota</taxon>
        <taxon>Diptera</taxon>
        <taxon>Brachycera</taxon>
        <taxon>Muscomorpha</taxon>
        <taxon>Ephydroidea</taxon>
        <taxon>Drosophilidae</taxon>
        <taxon>Drosophila</taxon>
        <taxon>Sophophora</taxon>
    </lineage>
</organism>
<comment type="function">
    <text evidence="1 3 4">Involved in pre-mRNA splicing as component of the spliceosome (By similarity). Associated with sn-RNP U2, where it contributes to the binding of stem loop IV of U2 snRNA (By similarity). In the germ line, has a role in oogenesis, by regulating spermatogenesis and nurse cell nuclei chromatin decondensation and dispersal, probably by regulating the splicing of proteins necessary for germline differentiation such as the meiotic protein mei-P26 (PubMed:24244416, PubMed:27035939).</text>
</comment>
<comment type="subunit">
    <text evidence="2">Interacts with the SMN complex.</text>
</comment>
<comment type="interaction">
    <interactant intactId="EBI-130179">
        <id>Q9V4Q8</id>
    </interactant>
    <interactant intactId="EBI-174177">
        <id>P43332</id>
        <label>snf</label>
    </interactant>
    <organismsDiffer>false</organismsDiffer>
    <experiments>3</experiments>
</comment>
<comment type="subcellular location">
    <subcellularLocation>
        <location evidence="5">Nucleus</location>
    </subcellularLocation>
</comment>
<comment type="disruption phenotype">
    <text evidence="3 4">Embryonic lethal (PubMed:27035939). RNAi-mediated knockdown in male germ cells, spermatogonia and surrounding somatic cells results in increased spermatogonia proliferation, failure to complete developmental programs of meiosis and differentiation and ultimately leads to complete male sterility (PubMed:27035939). RNAi-mediated knockdown in female germline results in defective oogenesis (PubMed:24244416).</text>
</comment>
<comment type="similarity">
    <text evidence="5">Belongs to the U2 small nuclear ribonucleoprotein A family.</text>
</comment>
<dbReference type="EMBL" id="AE013599">
    <property type="protein sequence ID" value="AAF59207.1"/>
    <property type="molecule type" value="Genomic_DNA"/>
</dbReference>
<dbReference type="EMBL" id="AY071516">
    <property type="protein sequence ID" value="AAL49138.1"/>
    <property type="molecule type" value="mRNA"/>
</dbReference>
<dbReference type="RefSeq" id="NP_610315.1">
    <property type="nucleotide sequence ID" value="NM_136471.4"/>
</dbReference>
<dbReference type="PDB" id="6F4G">
    <property type="method" value="X-ray"/>
    <property type="resolution" value="1.90 A"/>
    <property type="chains" value="A/D=1-176"/>
</dbReference>
<dbReference type="PDB" id="6F4J">
    <property type="method" value="X-ray"/>
    <property type="resolution" value="1.42 A"/>
    <property type="chains" value="A/B=1-176"/>
</dbReference>
<dbReference type="PDBsum" id="6F4G"/>
<dbReference type="PDBsum" id="6F4J"/>
<dbReference type="SMR" id="Q9V4Q8"/>
<dbReference type="BioGRID" id="61587">
    <property type="interactions" value="18"/>
</dbReference>
<dbReference type="FunCoup" id="Q9V4Q8">
    <property type="interactions" value="2636"/>
</dbReference>
<dbReference type="IntAct" id="Q9V4Q8">
    <property type="interactions" value="76"/>
</dbReference>
<dbReference type="STRING" id="7227.FBpp0088015"/>
<dbReference type="PaxDb" id="7227-FBpp0088015"/>
<dbReference type="DNASU" id="35713"/>
<dbReference type="EnsemblMetazoa" id="FBtr0088941">
    <property type="protein sequence ID" value="FBpp0088015"/>
    <property type="gene ID" value="FBgn0033210"/>
</dbReference>
<dbReference type="GeneID" id="35713"/>
<dbReference type="KEGG" id="dme:Dmel_CG1406"/>
<dbReference type="UCSC" id="CG1406-RA">
    <property type="organism name" value="d. melanogaster"/>
</dbReference>
<dbReference type="AGR" id="FB:FBgn0033210"/>
<dbReference type="CTD" id="35713"/>
<dbReference type="FlyBase" id="FBgn0033210">
    <property type="gene designation" value="U2A"/>
</dbReference>
<dbReference type="VEuPathDB" id="VectorBase:FBgn0033210"/>
<dbReference type="eggNOG" id="KOG1644">
    <property type="taxonomic scope" value="Eukaryota"/>
</dbReference>
<dbReference type="GeneTree" id="ENSGT00940000153289"/>
<dbReference type="HOGENOM" id="CLU_061027_1_0_1"/>
<dbReference type="InParanoid" id="Q9V4Q8"/>
<dbReference type="OMA" id="PNYREYM"/>
<dbReference type="OrthoDB" id="433501at2759"/>
<dbReference type="PhylomeDB" id="Q9V4Q8"/>
<dbReference type="Reactome" id="R-DME-72163">
    <property type="pathway name" value="mRNA Splicing - Major Pathway"/>
</dbReference>
<dbReference type="BioGRID-ORCS" id="35713">
    <property type="hits" value="1 hit in 1 CRISPR screen"/>
</dbReference>
<dbReference type="GenomeRNAi" id="35713"/>
<dbReference type="PRO" id="PR:Q9V4Q8"/>
<dbReference type="Proteomes" id="UP000000803">
    <property type="component" value="Chromosome 2R"/>
</dbReference>
<dbReference type="Bgee" id="FBgn0033210">
    <property type="expression patterns" value="Expressed in adult enteroendocrine precursor cell in adult midgut (Drosophila) and 51 other cell types or tissues"/>
</dbReference>
<dbReference type="GO" id="GO:0071013">
    <property type="term" value="C:catalytic step 2 spliceosome"/>
    <property type="evidence" value="ECO:0007005"/>
    <property type="project" value="FlyBase"/>
</dbReference>
<dbReference type="GO" id="GO:0071011">
    <property type="term" value="C:precatalytic spliceosome"/>
    <property type="evidence" value="ECO:0007005"/>
    <property type="project" value="FlyBase"/>
</dbReference>
<dbReference type="GO" id="GO:0030532">
    <property type="term" value="C:small nuclear ribonucleoprotein complex"/>
    <property type="evidence" value="ECO:0000250"/>
    <property type="project" value="FlyBase"/>
</dbReference>
<dbReference type="GO" id="GO:0005686">
    <property type="term" value="C:U2 snRNP"/>
    <property type="evidence" value="ECO:0000318"/>
    <property type="project" value="GO_Central"/>
</dbReference>
<dbReference type="GO" id="GO:0030620">
    <property type="term" value="F:U2 snRNA binding"/>
    <property type="evidence" value="ECO:0000318"/>
    <property type="project" value="GO_Central"/>
</dbReference>
<dbReference type="GO" id="GO:0006325">
    <property type="term" value="P:chromatin organization"/>
    <property type="evidence" value="ECO:0000315"/>
    <property type="project" value="FlyBase"/>
</dbReference>
<dbReference type="GO" id="GO:0000278">
    <property type="term" value="P:mitotic cell cycle"/>
    <property type="evidence" value="ECO:0007001"/>
    <property type="project" value="FlyBase"/>
</dbReference>
<dbReference type="GO" id="GO:0000398">
    <property type="term" value="P:mRNA splicing, via spliceosome"/>
    <property type="evidence" value="ECO:0000250"/>
    <property type="project" value="FlyBase"/>
</dbReference>
<dbReference type="GO" id="GO:0007283">
    <property type="term" value="P:spermatogenesis"/>
    <property type="evidence" value="ECO:0000315"/>
    <property type="project" value="FlyBase"/>
</dbReference>
<dbReference type="FunFam" id="3.80.10.10:FF:000026">
    <property type="entry name" value="U2 small nuclear ribonucleoprotein A"/>
    <property type="match status" value="1"/>
</dbReference>
<dbReference type="Gene3D" id="3.80.10.10">
    <property type="entry name" value="Ribonuclease Inhibitor"/>
    <property type="match status" value="1"/>
</dbReference>
<dbReference type="InterPro" id="IPR001611">
    <property type="entry name" value="Leu-rich_rpt"/>
</dbReference>
<dbReference type="InterPro" id="IPR032675">
    <property type="entry name" value="LRR_dom_sf"/>
</dbReference>
<dbReference type="InterPro" id="IPR044640">
    <property type="entry name" value="RU2A"/>
</dbReference>
<dbReference type="PANTHER" id="PTHR10552">
    <property type="entry name" value="U2 SMALL NUCLEAR RIBONUCLEOPROTEIN A"/>
    <property type="match status" value="1"/>
</dbReference>
<dbReference type="PANTHER" id="PTHR10552:SF6">
    <property type="entry name" value="U2 SMALL NUCLEAR RIBONUCLEOPROTEIN A"/>
    <property type="match status" value="1"/>
</dbReference>
<dbReference type="Pfam" id="PF14580">
    <property type="entry name" value="LRR_9"/>
    <property type="match status" value="1"/>
</dbReference>
<dbReference type="SUPFAM" id="SSF52058">
    <property type="entry name" value="L domain-like"/>
    <property type="match status" value="1"/>
</dbReference>
<dbReference type="PROSITE" id="PS51450">
    <property type="entry name" value="LRR"/>
    <property type="match status" value="4"/>
</dbReference>
<protein>
    <recommendedName>
        <fullName>Probable U2 small nuclear ribonucleoprotein A'</fullName>
        <shortName>U2 snRNP A'</shortName>
    </recommendedName>
</protein>
<name>RU2A_DROME</name>